<gene>
    <name evidence="1" type="primary">SEY1</name>
    <name type="ORF">LACBIDRAFT_189306</name>
</gene>
<accession>B0D0N9</accession>
<organism>
    <name type="scientific">Laccaria bicolor (strain S238N-H82 / ATCC MYA-4686)</name>
    <name type="common">Bicoloured deceiver</name>
    <name type="synonym">Laccaria laccata var. bicolor</name>
    <dbReference type="NCBI Taxonomy" id="486041"/>
    <lineage>
        <taxon>Eukaryota</taxon>
        <taxon>Fungi</taxon>
        <taxon>Dikarya</taxon>
        <taxon>Basidiomycota</taxon>
        <taxon>Agaricomycotina</taxon>
        <taxon>Agaricomycetes</taxon>
        <taxon>Agaricomycetidae</taxon>
        <taxon>Agaricales</taxon>
        <taxon>Agaricineae</taxon>
        <taxon>Hydnangiaceae</taxon>
        <taxon>Laccaria</taxon>
    </lineage>
</organism>
<protein>
    <recommendedName>
        <fullName evidence="1">Protein SEY1</fullName>
        <ecNumber evidence="1">3.6.5.-</ecNumber>
    </recommendedName>
</protein>
<comment type="function">
    <text evidence="1">Cooperates with the reticulon proteins and tubule-shaping DP1 family proteins to generate and maintain the structure of the tubular endoplasmic reticulum network. Has GTPase activity, which is required for its function in ER organization.</text>
</comment>
<comment type="subcellular location">
    <subcellularLocation>
        <location evidence="1">Endoplasmic reticulum membrane</location>
        <topology evidence="1">Multi-pass membrane protein</topology>
    </subcellularLocation>
    <text evidence="1">Enriched in the cortical ER. Concentrated in punctae along the ER tubules.</text>
</comment>
<comment type="similarity">
    <text evidence="2">Belongs to the TRAFAC class dynamin-like GTPase superfamily. GB1/RHD3 GTPase family. RHD3 subfamily.</text>
</comment>
<keyword id="KW-0175">Coiled coil</keyword>
<keyword id="KW-0256">Endoplasmic reticulum</keyword>
<keyword id="KW-0342">GTP-binding</keyword>
<keyword id="KW-0378">Hydrolase</keyword>
<keyword id="KW-0472">Membrane</keyword>
<keyword id="KW-0547">Nucleotide-binding</keyword>
<keyword id="KW-1185">Reference proteome</keyword>
<keyword id="KW-0812">Transmembrane</keyword>
<keyword id="KW-1133">Transmembrane helix</keyword>
<feature type="chain" id="PRO_0000384983" description="Protein SEY1">
    <location>
        <begin position="1"/>
        <end position="785"/>
    </location>
</feature>
<feature type="topological domain" description="Cytoplasmic" evidence="1">
    <location>
        <begin position="1"/>
        <end position="689"/>
    </location>
</feature>
<feature type="transmembrane region" description="Helical" evidence="1">
    <location>
        <begin position="690"/>
        <end position="710"/>
    </location>
</feature>
<feature type="topological domain" description="Lumenal" evidence="1">
    <location>
        <begin position="711"/>
        <end position="713"/>
    </location>
</feature>
<feature type="transmembrane region" description="Helical" evidence="1">
    <location>
        <begin position="714"/>
        <end position="734"/>
    </location>
</feature>
<feature type="topological domain" description="Cytoplasmic" evidence="1">
    <location>
        <begin position="735"/>
        <end position="785"/>
    </location>
</feature>
<feature type="domain" description="GB1/RHD3-type G" evidence="2">
    <location>
        <begin position="61"/>
        <end position="281"/>
    </location>
</feature>
<feature type="region of interest" description="Disordered" evidence="3">
    <location>
        <begin position="1"/>
        <end position="31"/>
    </location>
</feature>
<feature type="coiled-coil region" evidence="1">
    <location>
        <begin position="458"/>
        <end position="482"/>
    </location>
</feature>
<feature type="compositionally biased region" description="Low complexity" evidence="3">
    <location>
        <begin position="22"/>
        <end position="31"/>
    </location>
</feature>
<feature type="binding site" evidence="1">
    <location>
        <begin position="71"/>
        <end position="78"/>
    </location>
    <ligand>
        <name>GTP</name>
        <dbReference type="ChEBI" id="CHEBI:37565"/>
    </ligand>
</feature>
<name>SEY1_LACBS</name>
<reference key="1">
    <citation type="journal article" date="2008" name="Nature">
        <title>The genome of Laccaria bicolor provides insights into mycorrhizal symbiosis.</title>
        <authorList>
            <person name="Martin F."/>
            <person name="Aerts A."/>
            <person name="Ahren D."/>
            <person name="Brun A."/>
            <person name="Danchin E.G.J."/>
            <person name="Duchaussoy F."/>
            <person name="Gibon J."/>
            <person name="Kohler A."/>
            <person name="Lindquist E."/>
            <person name="Pereda V."/>
            <person name="Salamov A."/>
            <person name="Shapiro H.J."/>
            <person name="Wuyts J."/>
            <person name="Blaudez D."/>
            <person name="Buee M."/>
            <person name="Brokstein P."/>
            <person name="Canbaeck B."/>
            <person name="Cohen D."/>
            <person name="Courty P.E."/>
            <person name="Coutinho P.M."/>
            <person name="Delaruelle C."/>
            <person name="Detter J.C."/>
            <person name="Deveau A."/>
            <person name="DiFazio S."/>
            <person name="Duplessis S."/>
            <person name="Fraissinet-Tachet L."/>
            <person name="Lucic E."/>
            <person name="Frey-Klett P."/>
            <person name="Fourrey C."/>
            <person name="Feussner I."/>
            <person name="Gay G."/>
            <person name="Grimwood J."/>
            <person name="Hoegger P.J."/>
            <person name="Jain P."/>
            <person name="Kilaru S."/>
            <person name="Labbe J."/>
            <person name="Lin Y.C."/>
            <person name="Legue V."/>
            <person name="Le Tacon F."/>
            <person name="Marmeisse R."/>
            <person name="Melayah D."/>
            <person name="Montanini B."/>
            <person name="Muratet M."/>
            <person name="Nehls U."/>
            <person name="Niculita-Hirzel H."/>
            <person name="Oudot-Le Secq M.P."/>
            <person name="Peter M."/>
            <person name="Quesneville H."/>
            <person name="Rajashekar B."/>
            <person name="Reich M."/>
            <person name="Rouhier N."/>
            <person name="Schmutz J."/>
            <person name="Yin T."/>
            <person name="Chalot M."/>
            <person name="Henrissat B."/>
            <person name="Kuees U."/>
            <person name="Lucas S."/>
            <person name="Van de Peer Y."/>
            <person name="Podila G.K."/>
            <person name="Polle A."/>
            <person name="Pukkila P.J."/>
            <person name="Richardson P.M."/>
            <person name="Rouze P."/>
            <person name="Sanders I.R."/>
            <person name="Stajich J.E."/>
            <person name="Tunlid A."/>
            <person name="Tuskan G."/>
            <person name="Grigoriev I.V."/>
        </authorList>
    </citation>
    <scope>NUCLEOTIDE SEQUENCE [LARGE SCALE GENOMIC DNA]</scope>
    <source>
        <strain>S238N-H82 / ATCC MYA-4686</strain>
    </source>
</reference>
<evidence type="ECO:0000255" key="1">
    <source>
        <dbReference type="HAMAP-Rule" id="MF_03109"/>
    </source>
</evidence>
<evidence type="ECO:0000255" key="2">
    <source>
        <dbReference type="PROSITE-ProRule" id="PRU01052"/>
    </source>
</evidence>
<evidence type="ECO:0000256" key="3">
    <source>
        <dbReference type="SAM" id="MobiDB-lite"/>
    </source>
</evidence>
<dbReference type="EC" id="3.6.5.-" evidence="1"/>
<dbReference type="EMBL" id="DS547095">
    <property type="protein sequence ID" value="EDR11495.1"/>
    <property type="molecule type" value="Genomic_DNA"/>
</dbReference>
<dbReference type="RefSeq" id="XP_001877392.1">
    <property type="nucleotide sequence ID" value="XM_001877357.1"/>
</dbReference>
<dbReference type="SMR" id="B0D0N9"/>
<dbReference type="FunCoup" id="B0D0N9">
    <property type="interactions" value="148"/>
</dbReference>
<dbReference type="STRING" id="486041.B0D0N9"/>
<dbReference type="GeneID" id="6073441"/>
<dbReference type="KEGG" id="lbc:LACBIDRAFT_189306"/>
<dbReference type="HOGENOM" id="CLU_011270_0_0_1"/>
<dbReference type="InParanoid" id="B0D0N9"/>
<dbReference type="OrthoDB" id="1597724at2759"/>
<dbReference type="Proteomes" id="UP000001194">
    <property type="component" value="Unassembled WGS sequence"/>
</dbReference>
<dbReference type="GO" id="GO:0005789">
    <property type="term" value="C:endoplasmic reticulum membrane"/>
    <property type="evidence" value="ECO:0007669"/>
    <property type="project" value="UniProtKB-SubCell"/>
</dbReference>
<dbReference type="GO" id="GO:0005525">
    <property type="term" value="F:GTP binding"/>
    <property type="evidence" value="ECO:0007669"/>
    <property type="project" value="UniProtKB-UniRule"/>
</dbReference>
<dbReference type="GO" id="GO:0003924">
    <property type="term" value="F:GTPase activity"/>
    <property type="evidence" value="ECO:0007669"/>
    <property type="project" value="UniProtKB-UniRule"/>
</dbReference>
<dbReference type="GO" id="GO:0016320">
    <property type="term" value="P:endoplasmic reticulum membrane fusion"/>
    <property type="evidence" value="ECO:0007669"/>
    <property type="project" value="TreeGrafter"/>
</dbReference>
<dbReference type="CDD" id="cd01851">
    <property type="entry name" value="GBP"/>
    <property type="match status" value="1"/>
</dbReference>
<dbReference type="FunFam" id="3.40.50.300:FF:000727">
    <property type="entry name" value="Protein SEY1 homolog"/>
    <property type="match status" value="1"/>
</dbReference>
<dbReference type="Gene3D" id="3.40.50.300">
    <property type="entry name" value="P-loop containing nucleotide triphosphate hydrolases"/>
    <property type="match status" value="1"/>
</dbReference>
<dbReference type="HAMAP" id="MF_03109">
    <property type="entry name" value="Sey1"/>
    <property type="match status" value="1"/>
</dbReference>
<dbReference type="InterPro" id="IPR030386">
    <property type="entry name" value="G_GB1_RHD3_dom"/>
</dbReference>
<dbReference type="InterPro" id="IPR027417">
    <property type="entry name" value="P-loop_NTPase"/>
</dbReference>
<dbReference type="InterPro" id="IPR008803">
    <property type="entry name" value="RHD3/Sey1"/>
</dbReference>
<dbReference type="InterPro" id="IPR046758">
    <property type="entry name" value="Sey1/RHD3-like_3HB"/>
</dbReference>
<dbReference type="PANTHER" id="PTHR45923">
    <property type="entry name" value="PROTEIN SEY1"/>
    <property type="match status" value="1"/>
</dbReference>
<dbReference type="PANTHER" id="PTHR45923:SF2">
    <property type="entry name" value="PROTEIN SEY1"/>
    <property type="match status" value="1"/>
</dbReference>
<dbReference type="Pfam" id="PF05879">
    <property type="entry name" value="RHD3_GTPase"/>
    <property type="match status" value="1"/>
</dbReference>
<dbReference type="Pfam" id="PF20428">
    <property type="entry name" value="Sey1_3HB"/>
    <property type="match status" value="1"/>
</dbReference>
<dbReference type="SUPFAM" id="SSF52540">
    <property type="entry name" value="P-loop containing nucleoside triphosphate hydrolases"/>
    <property type="match status" value="1"/>
</dbReference>
<dbReference type="PROSITE" id="PS51715">
    <property type="entry name" value="G_GB1_RHD3"/>
    <property type="match status" value="1"/>
</dbReference>
<proteinExistence type="inferred from homology"/>
<sequence length="785" mass="89065">MASAAPINLRAQDTPYVPPTSLPTSSSQTGSTARIQIIDDEKKFTPDLATQIERWGLRDAGFSYNIVAVFGSQSTGKSTLLNRLFGTTFDVMDETRRQQTTKGIWMCRGKDMGVMVMDVEGTDGRERGEDQDFERKSALFSLASSEILIVNLWEHQVGLYQGANMGLLKTVFEVNLGLFGKKAQDGSNGRTLLLFVIRDHIGQTPLANLQATLTADLNRIWESLSKPTDLKDRLLSDYFDLAFTALPHKILSADKFESEVQELRTRFVDKESSDYLFKPAYHKRIPADGVAFYMEGIWEQVQTNKDLDLPTQQELLAQFRCDEISAVALAEFNEQAKSQKRPVEGGRVVEGLGAMMNNWRTQALTRYDRDASRYHKGVYGRKRADLVAVLDSTLSPLFLGQLKNLHKSCLVTFKKEMLDGLHGEDYDFANVFKRAREKSERTFSEGGKEALVEGTDWSWEEELELLRDEIRAVADQCRKDETTKMINLIERNLKKHISEPVELHLGKASPDMWDEILRVFRDTLDKAEKTYLTKAKSFNCTEEENTAALDALRKRGWVALRAKIDEQTADPIILGKLRNHFEERFRYDEQGVPRVWKPDDDIDSAFMKAKDQTLDLVPLYSKISPKDTSLEFNLPSESNDSFSNDDFDLSTSPVIFTETKCLDLTNKFRRDADAYYVEAKRSTVASIAQIPYWIYGVLVVLGWNEAMLVLFNPLYFAFLLLAMATSYIIAQLGLVGPLFQVTRTVGSEIQRQATARLREHFSQPVLAEPVQVGPSRDREEVGQIQ</sequence>